<dbReference type="EMBL" id="CP000720">
    <property type="protein sequence ID" value="ABS49378.1"/>
    <property type="molecule type" value="Genomic_DNA"/>
</dbReference>
<dbReference type="RefSeq" id="WP_012104738.1">
    <property type="nucleotide sequence ID" value="NC_009708.1"/>
</dbReference>
<dbReference type="SMR" id="A7FFG1"/>
<dbReference type="KEGG" id="ypi:YpsIP31758_1005"/>
<dbReference type="HOGENOM" id="CLU_121866_0_0_6"/>
<dbReference type="Proteomes" id="UP000002412">
    <property type="component" value="Chromosome"/>
</dbReference>
<dbReference type="GO" id="GO:0009898">
    <property type="term" value="C:cytoplasmic side of plasma membrane"/>
    <property type="evidence" value="ECO:0007669"/>
    <property type="project" value="InterPro"/>
</dbReference>
<dbReference type="CDD" id="cd16323">
    <property type="entry name" value="Syd"/>
    <property type="match status" value="1"/>
</dbReference>
<dbReference type="Gene3D" id="3.40.1580.20">
    <property type="entry name" value="Syd protein"/>
    <property type="match status" value="1"/>
</dbReference>
<dbReference type="HAMAP" id="MF_01104">
    <property type="entry name" value="Syd"/>
    <property type="match status" value="1"/>
</dbReference>
<dbReference type="InterPro" id="IPR009948">
    <property type="entry name" value="Syd"/>
</dbReference>
<dbReference type="InterPro" id="IPR038228">
    <property type="entry name" value="Syd_sf"/>
</dbReference>
<dbReference type="NCBIfam" id="NF003439">
    <property type="entry name" value="PRK04968.1"/>
    <property type="match status" value="1"/>
</dbReference>
<dbReference type="Pfam" id="PF07348">
    <property type="entry name" value="Syd"/>
    <property type="match status" value="1"/>
</dbReference>
<sequence length="183" mass="20708">MDLNISTALRSFTQRYIDLWQQQTGHLPASKDLYGVPSPCIVATGEDQVFWQPQAFLPEATLTNIERALEIQLHPDIHDFYTQQYAGDMMADLGNHRFTLLQVWSEDDFIRLQENLIGHLVTQKRLKLSPTLFLATTSSEMTMASLCNVSGNVVLEQFGSDKRTLLASTLSHFLDALRPVLPE</sequence>
<accession>A7FFG1</accession>
<proteinExistence type="inferred from homology"/>
<evidence type="ECO:0000255" key="1">
    <source>
        <dbReference type="HAMAP-Rule" id="MF_01104"/>
    </source>
</evidence>
<name>SYDP_YERP3</name>
<comment type="function">
    <text evidence="1">Interacts with the SecY protein in vivo. May bind preferentially to an uncomplexed state of SecY, thus functioning either as a chelating agent for excess SecY in the cell or as a regulatory factor that negatively controls the translocase function.</text>
</comment>
<comment type="subcellular location">
    <subcellularLocation>
        <location evidence="1">Cell inner membrane</location>
        <topology evidence="1">Peripheral membrane protein</topology>
        <orientation evidence="1">Cytoplasmic side</orientation>
    </subcellularLocation>
    <text evidence="1">Loosely associated with the cytoplasmic side of the inner membrane, probably via SecY.</text>
</comment>
<comment type="similarity">
    <text evidence="1">Belongs to the Syd family.</text>
</comment>
<protein>
    <recommendedName>
        <fullName evidence="1">Protein Syd</fullName>
    </recommendedName>
</protein>
<reference key="1">
    <citation type="journal article" date="2007" name="PLoS Genet.">
        <title>The complete genome sequence of Yersinia pseudotuberculosis IP31758, the causative agent of Far East scarlet-like fever.</title>
        <authorList>
            <person name="Eppinger M."/>
            <person name="Rosovitz M.J."/>
            <person name="Fricke W.F."/>
            <person name="Rasko D.A."/>
            <person name="Kokorina G."/>
            <person name="Fayolle C."/>
            <person name="Lindler L.E."/>
            <person name="Carniel E."/>
            <person name="Ravel J."/>
        </authorList>
    </citation>
    <scope>NUCLEOTIDE SEQUENCE [LARGE SCALE GENOMIC DNA]</scope>
    <source>
        <strain>IP 31758</strain>
    </source>
</reference>
<organism>
    <name type="scientific">Yersinia pseudotuberculosis serotype O:1b (strain IP 31758)</name>
    <dbReference type="NCBI Taxonomy" id="349747"/>
    <lineage>
        <taxon>Bacteria</taxon>
        <taxon>Pseudomonadati</taxon>
        <taxon>Pseudomonadota</taxon>
        <taxon>Gammaproteobacteria</taxon>
        <taxon>Enterobacterales</taxon>
        <taxon>Yersiniaceae</taxon>
        <taxon>Yersinia</taxon>
    </lineage>
</organism>
<feature type="chain" id="PRO_1000065047" description="Protein Syd">
    <location>
        <begin position="1"/>
        <end position="183"/>
    </location>
</feature>
<keyword id="KW-0997">Cell inner membrane</keyword>
<keyword id="KW-1003">Cell membrane</keyword>
<keyword id="KW-0472">Membrane</keyword>
<gene>
    <name evidence="1" type="primary">syd</name>
    <name type="ordered locus">YpsIP31758_1005</name>
</gene>